<feature type="signal peptide" evidence="2">
    <location>
        <begin position="1"/>
        <end position="24"/>
    </location>
</feature>
<feature type="peptide" id="PRO_0000015895" description="Insulin-1 B chain" evidence="3">
    <location>
        <begin position="25"/>
        <end position="54"/>
    </location>
</feature>
<feature type="propeptide" id="PRO_0000015896" description="C peptide">
    <location>
        <begin position="57"/>
        <end position="87"/>
    </location>
</feature>
<feature type="peptide" id="PRO_0000015897" description="Insulin-1 A chain" evidence="3">
    <location>
        <begin position="90"/>
        <end position="110"/>
    </location>
</feature>
<feature type="disulfide bond" description="Interchain (between B and A chains)" evidence="1">
    <location>
        <begin position="31"/>
        <end position="96"/>
    </location>
</feature>
<feature type="disulfide bond" description="Interchain (between B and A chains)" evidence="1">
    <location>
        <begin position="43"/>
        <end position="109"/>
    </location>
</feature>
<feature type="disulfide bond" evidence="1">
    <location>
        <begin position="95"/>
        <end position="100"/>
    </location>
</feature>
<evidence type="ECO:0000250" key="1">
    <source>
        <dbReference type="UniProtKB" id="P01308"/>
    </source>
</evidence>
<evidence type="ECO:0000269" key="2">
    <source>
    </source>
</evidence>
<evidence type="ECO:0000269" key="3">
    <source>
    </source>
</evidence>
<evidence type="ECO:0000305" key="4"/>
<accession>P01322</accession>
<comment type="function">
    <text>Insulin decreases blood glucose concentration. It increases cell permeability to monosaccharides, amino acids and fatty acids. It accelerates glycolysis, the pentose phosphate cycle, and glycogen synthesis in liver.</text>
</comment>
<comment type="subunit">
    <text evidence="1">Heterodimer of a B chain and an A chain linked by two disulfide bonds.</text>
</comment>
<comment type="subcellular location">
    <subcellularLocation>
        <location>Secreted</location>
    </subcellularLocation>
</comment>
<comment type="similarity">
    <text evidence="4">Belongs to the insulin family.</text>
</comment>
<dbReference type="EMBL" id="V01242">
    <property type="protein sequence ID" value="CAA24559.1"/>
    <property type="molecule type" value="Genomic_DNA"/>
</dbReference>
<dbReference type="EMBL" id="J00747">
    <property type="protein sequence ID" value="AAA41442.1"/>
    <property type="molecule type" value="Genomic_DNA"/>
</dbReference>
<dbReference type="EMBL" id="M25584">
    <property type="protein sequence ID" value="AAA41439.1"/>
    <property type="molecule type" value="Genomic_DNA"/>
</dbReference>
<dbReference type="PIR" id="A90788">
    <property type="entry name" value="IPRT1"/>
</dbReference>
<dbReference type="RefSeq" id="NP_062002.1">
    <property type="nucleotide sequence ID" value="NM_019129.3"/>
</dbReference>
<dbReference type="SMR" id="P01322"/>
<dbReference type="FunCoup" id="P01322">
    <property type="interactions" value="629"/>
</dbReference>
<dbReference type="STRING" id="10116.ENSRNOP00000016052"/>
<dbReference type="PaxDb" id="10116-ENSRNOP00000016052"/>
<dbReference type="Ensembl" id="ENSRNOT00000016052.6">
    <property type="protein sequence ID" value="ENSRNOP00000016052.3"/>
    <property type="gene ID" value="ENSRNOG00000012052.6"/>
</dbReference>
<dbReference type="GeneID" id="24505"/>
<dbReference type="KEGG" id="rno:24505"/>
<dbReference type="UCSC" id="RGD:2915">
    <property type="organism name" value="rat"/>
</dbReference>
<dbReference type="AGR" id="RGD:2915"/>
<dbReference type="CTD" id="16333"/>
<dbReference type="RGD" id="2915">
    <property type="gene designation" value="Ins1"/>
</dbReference>
<dbReference type="eggNOG" id="ENOG502S5P5">
    <property type="taxonomic scope" value="Eukaryota"/>
</dbReference>
<dbReference type="GeneTree" id="ENSGT00390000015440"/>
<dbReference type="HOGENOM" id="CLU_140421_1_0_1"/>
<dbReference type="InParanoid" id="P01322"/>
<dbReference type="OMA" id="PNRAHKR"/>
<dbReference type="OrthoDB" id="10019596at2759"/>
<dbReference type="PhylomeDB" id="P01322"/>
<dbReference type="TreeFam" id="TF332820"/>
<dbReference type="Reactome" id="R-RNO-264876">
    <property type="pathway name" value="Insulin processing"/>
</dbReference>
<dbReference type="Reactome" id="R-RNO-422085">
    <property type="pathway name" value="Synthesis, secretion, and deacylation of Ghrelin"/>
</dbReference>
<dbReference type="Reactome" id="R-RNO-6807878">
    <property type="pathway name" value="COPI-mediated anterograde transport"/>
</dbReference>
<dbReference type="Reactome" id="R-RNO-6811558">
    <property type="pathway name" value="PI5P, PP2A and IER3 Regulate PI3K/AKT Signaling"/>
</dbReference>
<dbReference type="Reactome" id="R-RNO-74713">
    <property type="pathway name" value="IRS activation"/>
</dbReference>
<dbReference type="Reactome" id="R-RNO-74749">
    <property type="pathway name" value="Signal attenuation"/>
</dbReference>
<dbReference type="Reactome" id="R-RNO-74751">
    <property type="pathway name" value="Insulin receptor signalling cascade"/>
</dbReference>
<dbReference type="Reactome" id="R-RNO-74752">
    <property type="pathway name" value="Signaling by Insulin receptor"/>
</dbReference>
<dbReference type="Reactome" id="R-RNO-77387">
    <property type="pathway name" value="Insulin receptor recycling"/>
</dbReference>
<dbReference type="PRO" id="PR:P01322"/>
<dbReference type="Proteomes" id="UP000002494">
    <property type="component" value="Chromosome 1"/>
</dbReference>
<dbReference type="Bgee" id="ENSRNOG00000012052">
    <property type="expression patterns" value="Expressed in pancreas and 6 other cell types or tissues"/>
</dbReference>
<dbReference type="GO" id="GO:0005829">
    <property type="term" value="C:cytosol"/>
    <property type="evidence" value="ECO:0000266"/>
    <property type="project" value="RGD"/>
</dbReference>
<dbReference type="GO" id="GO:0005615">
    <property type="term" value="C:extracellular space"/>
    <property type="evidence" value="ECO:0000314"/>
    <property type="project" value="RGD"/>
</dbReference>
<dbReference type="GO" id="GO:0005179">
    <property type="term" value="F:hormone activity"/>
    <property type="evidence" value="ECO:0007669"/>
    <property type="project" value="UniProtKB-KW"/>
</dbReference>
<dbReference type="GO" id="GO:0005158">
    <property type="term" value="F:insulin receptor binding"/>
    <property type="evidence" value="ECO:0000314"/>
    <property type="project" value="RGD"/>
</dbReference>
<dbReference type="GO" id="GO:0071333">
    <property type="term" value="P:cellular response to glucose stimulus"/>
    <property type="evidence" value="ECO:0000270"/>
    <property type="project" value="RGD"/>
</dbReference>
<dbReference type="GO" id="GO:1901701">
    <property type="term" value="P:cellular response to oxygen-containing compound"/>
    <property type="evidence" value="ECO:0000270"/>
    <property type="project" value="RGD"/>
</dbReference>
<dbReference type="GO" id="GO:0042593">
    <property type="term" value="P:glucose homeostasis"/>
    <property type="evidence" value="ECO:0000318"/>
    <property type="project" value="GO_Central"/>
</dbReference>
<dbReference type="GO" id="GO:0006006">
    <property type="term" value="P:glucose metabolic process"/>
    <property type="evidence" value="ECO:0007669"/>
    <property type="project" value="UniProtKB-KW"/>
</dbReference>
<dbReference type="GO" id="GO:0008286">
    <property type="term" value="P:insulin receptor signaling pathway"/>
    <property type="evidence" value="ECO:0000266"/>
    <property type="project" value="RGD"/>
</dbReference>
<dbReference type="GO" id="GO:0050714">
    <property type="term" value="P:positive regulation of protein secretion"/>
    <property type="evidence" value="ECO:0000318"/>
    <property type="project" value="GO_Central"/>
</dbReference>
<dbReference type="GO" id="GO:0031623">
    <property type="term" value="P:receptor internalization"/>
    <property type="evidence" value="ECO:0000266"/>
    <property type="project" value="RGD"/>
</dbReference>
<dbReference type="GO" id="GO:0051591">
    <property type="term" value="P:response to cAMP"/>
    <property type="evidence" value="ECO:0000270"/>
    <property type="project" value="RGD"/>
</dbReference>
<dbReference type="GO" id="GO:0034097">
    <property type="term" value="P:response to cytokine"/>
    <property type="evidence" value="ECO:0000270"/>
    <property type="project" value="RGD"/>
</dbReference>
<dbReference type="GO" id="GO:1904619">
    <property type="term" value="P:response to dimethyl sulfoxide"/>
    <property type="evidence" value="ECO:0000270"/>
    <property type="project" value="RGD"/>
</dbReference>
<dbReference type="GO" id="GO:0043434">
    <property type="term" value="P:response to peptide hormone"/>
    <property type="evidence" value="ECO:0000270"/>
    <property type="project" value="RGD"/>
</dbReference>
<dbReference type="CDD" id="cd04367">
    <property type="entry name" value="IlGF_insulin_like"/>
    <property type="match status" value="1"/>
</dbReference>
<dbReference type="FunFam" id="1.10.100.10:FF:000003">
    <property type="entry name" value="Insulin"/>
    <property type="match status" value="1"/>
</dbReference>
<dbReference type="Gene3D" id="1.10.100.10">
    <property type="entry name" value="Insulin-like"/>
    <property type="match status" value="1"/>
</dbReference>
<dbReference type="InterPro" id="IPR004825">
    <property type="entry name" value="Insulin"/>
</dbReference>
<dbReference type="InterPro" id="IPR016179">
    <property type="entry name" value="Insulin-like"/>
</dbReference>
<dbReference type="InterPro" id="IPR036438">
    <property type="entry name" value="Insulin-like_sf"/>
</dbReference>
<dbReference type="InterPro" id="IPR022353">
    <property type="entry name" value="Insulin_CS"/>
</dbReference>
<dbReference type="InterPro" id="IPR022352">
    <property type="entry name" value="Insulin_family"/>
</dbReference>
<dbReference type="PANTHER" id="PTHR11454:SF9">
    <property type="entry name" value="INSULIN"/>
    <property type="match status" value="1"/>
</dbReference>
<dbReference type="PANTHER" id="PTHR11454">
    <property type="entry name" value="INSULIN/INSULIN GROWTH FACTOR"/>
    <property type="match status" value="1"/>
</dbReference>
<dbReference type="Pfam" id="PF00049">
    <property type="entry name" value="Insulin"/>
    <property type="match status" value="1"/>
</dbReference>
<dbReference type="PRINTS" id="PR00277">
    <property type="entry name" value="INSULIN"/>
</dbReference>
<dbReference type="PRINTS" id="PR00276">
    <property type="entry name" value="INSULINFAMLY"/>
</dbReference>
<dbReference type="SMART" id="SM00078">
    <property type="entry name" value="IlGF"/>
    <property type="match status" value="1"/>
</dbReference>
<dbReference type="SUPFAM" id="SSF56994">
    <property type="entry name" value="Insulin-like"/>
    <property type="match status" value="1"/>
</dbReference>
<dbReference type="PROSITE" id="PS00262">
    <property type="entry name" value="INSULIN"/>
    <property type="match status" value="1"/>
</dbReference>
<keyword id="KW-0119">Carbohydrate metabolism</keyword>
<keyword id="KW-0165">Cleavage on pair of basic residues</keyword>
<keyword id="KW-0903">Direct protein sequencing</keyword>
<keyword id="KW-1015">Disulfide bond</keyword>
<keyword id="KW-0313">Glucose metabolism</keyword>
<keyword id="KW-0372">Hormone</keyword>
<keyword id="KW-1185">Reference proteome</keyword>
<keyword id="KW-0964">Secreted</keyword>
<keyword id="KW-0732">Signal</keyword>
<organism>
    <name type="scientific">Rattus norvegicus</name>
    <name type="common">Rat</name>
    <dbReference type="NCBI Taxonomy" id="10116"/>
    <lineage>
        <taxon>Eukaryota</taxon>
        <taxon>Metazoa</taxon>
        <taxon>Chordata</taxon>
        <taxon>Craniata</taxon>
        <taxon>Vertebrata</taxon>
        <taxon>Euteleostomi</taxon>
        <taxon>Mammalia</taxon>
        <taxon>Eutheria</taxon>
        <taxon>Euarchontoglires</taxon>
        <taxon>Glires</taxon>
        <taxon>Rodentia</taxon>
        <taxon>Myomorpha</taxon>
        <taxon>Muroidea</taxon>
        <taxon>Muridae</taxon>
        <taxon>Murinae</taxon>
        <taxon>Rattus</taxon>
    </lineage>
</organism>
<gene>
    <name type="primary">Ins1</name>
    <name type="synonym">Ins-1</name>
</gene>
<name>INS1_RAT</name>
<sequence>MALWMRFLPLLALLVLWEPKPAQAFVKQHLCGPHLVEALYLVCGERGFFYTPKSRREVEDPQVPQLELGGGPEAGDLQTLALEVARQKRGIVDQCCTSICSLYQLENYCN</sequence>
<proteinExistence type="evidence at protein level"/>
<reference key="1">
    <citation type="journal article" date="1979" name="Cell">
        <title>Isolation and characterization of a cloned rat insulin gene.</title>
        <authorList>
            <person name="Cordell B."/>
            <person name="Bell G.I."/>
            <person name="Tischer E."/>
            <person name="Denoto F.M."/>
            <person name="Ullrich A."/>
            <person name="Pictet R.L."/>
            <person name="Rutter W.J."/>
            <person name="Goodman H.M."/>
        </authorList>
    </citation>
    <scope>NUCLEOTIDE SEQUENCE [GENOMIC DNA]</scope>
</reference>
<reference key="2">
    <citation type="journal article" date="1979" name="Cell">
        <title>The structure and evolution of the two nonallelic rat preproinsulin genes.</title>
        <authorList>
            <person name="Lomedico P."/>
            <person name="Rosenthal N."/>
            <person name="Efstratiadis A."/>
            <person name="Gilbert W."/>
            <person name="Kolodner R."/>
            <person name="Tizard R."/>
        </authorList>
    </citation>
    <scope>NUCLEOTIDE SEQUENCE [GENOMIC DNA]</scope>
    <source>
        <strain>Sprague-Dawley</strain>
        <tissue>Liver</tissue>
    </source>
</reference>
<reference key="3">
    <citation type="journal article" date="1980" name="Ann. N. Y. Acad. Sci.">
        <title>The structure of rat preproinsulin genes.</title>
        <authorList>
            <person name="Lomedico P.T."/>
            <person name="Rosenthal N."/>
            <person name="Kolodner R."/>
            <person name="Efstratiadis A."/>
            <person name="Gilbert W."/>
        </authorList>
    </citation>
    <scope>NUCLEOTIDE SEQUENCE [GENOMIC DNA]</scope>
</reference>
<reference key="4">
    <citation type="journal article" date="1969" name="Recent Prog. Horm. Res.">
        <title>Proinsulin and the biosynthesis of insulin.</title>
        <authorList>
            <person name="Steiner D.F."/>
            <person name="Clark J.L."/>
            <person name="Nolan C."/>
            <person name="Rubenstein A.H."/>
            <person name="Margoliash E."/>
            <person name="Aten B."/>
            <person name="Oyer P.E."/>
        </authorList>
    </citation>
    <scope>PROTEIN SEQUENCE OF 25-54 AND 90-110</scope>
</reference>
<reference key="5">
    <citation type="journal article" date="1972" name="J. Biol. Chem.">
        <title>Primary structures of the proinsulin connecting peptides of the rat and the horse.</title>
        <authorList>
            <person name="Tager H.S."/>
            <person name="Steiner D.F."/>
        </authorList>
    </citation>
    <scope>PROTEIN SEQUENCE OF 57-87</scope>
</reference>
<reference key="6">
    <citation type="journal article" date="1972" name="Eur. J. Biochem.">
        <title>Rat-proinsulin C-peptides. Amino-acid sequences.</title>
        <authorList>
            <person name="Markussen J."/>
            <person name="Sundby F."/>
        </authorList>
    </citation>
    <scope>PROTEIN SEQUENCE OF 57-87</scope>
    <scope>SEQUENCE REVISION</scope>
</reference>
<protein>
    <recommendedName>
        <fullName>Insulin-1</fullName>
    </recommendedName>
    <component>
        <recommendedName>
            <fullName>Insulin-1 B chain</fullName>
        </recommendedName>
    </component>
    <component>
        <recommendedName>
            <fullName>Insulin-1 A chain</fullName>
        </recommendedName>
    </component>
</protein>